<keyword id="KW-0320">Glycogen biosynthesis</keyword>
<keyword id="KW-0328">Glycosyltransferase</keyword>
<keyword id="KW-1185">Reference proteome</keyword>
<keyword id="KW-0808">Transferase</keyword>
<accession>Q0BPL3</accession>
<feature type="chain" id="PRO_1000014361" description="Glycogen synthase">
    <location>
        <begin position="1"/>
        <end position="480"/>
    </location>
</feature>
<feature type="binding site" evidence="1">
    <location>
        <position position="15"/>
    </location>
    <ligand>
        <name>ADP-alpha-D-glucose</name>
        <dbReference type="ChEBI" id="CHEBI:57498"/>
    </ligand>
</feature>
<evidence type="ECO:0000255" key="1">
    <source>
        <dbReference type="HAMAP-Rule" id="MF_00484"/>
    </source>
</evidence>
<organism>
    <name type="scientific">Granulibacter bethesdensis (strain ATCC BAA-1260 / CGDNIH1)</name>
    <dbReference type="NCBI Taxonomy" id="391165"/>
    <lineage>
        <taxon>Bacteria</taxon>
        <taxon>Pseudomonadati</taxon>
        <taxon>Pseudomonadota</taxon>
        <taxon>Alphaproteobacteria</taxon>
        <taxon>Acetobacterales</taxon>
        <taxon>Acetobacteraceae</taxon>
        <taxon>Granulibacter</taxon>
    </lineage>
</organism>
<protein>
    <recommendedName>
        <fullName evidence="1">Glycogen synthase</fullName>
        <ecNumber evidence="1">2.4.1.21</ecNumber>
    </recommendedName>
    <alternativeName>
        <fullName evidence="1">Starch [bacterial glycogen] synthase</fullName>
    </alternativeName>
</protein>
<proteinExistence type="inferred from homology"/>
<reference key="1">
    <citation type="journal article" date="2007" name="J. Bacteriol.">
        <title>Genome sequence analysis of the emerging human pathogenic acetic acid bacterium Granulibacter bethesdensis.</title>
        <authorList>
            <person name="Greenberg D.E."/>
            <person name="Porcella S.F."/>
            <person name="Zelazny A.M."/>
            <person name="Virtaneva K."/>
            <person name="Sturdevant D.E."/>
            <person name="Kupko J.J. III"/>
            <person name="Barbian K.D."/>
            <person name="Babar A."/>
            <person name="Dorward D.W."/>
            <person name="Holland S.M."/>
        </authorList>
    </citation>
    <scope>NUCLEOTIDE SEQUENCE [LARGE SCALE GENOMIC DNA]</scope>
    <source>
        <strain>ATCC BAA-1260 / CGDNIH1</strain>
    </source>
</reference>
<sequence length="480" mass="52021">MRVLNVASEAYPWIKTGGLADVAGALPAALAEHDVDMRTLLPAYAGLRQRPETRPVHHYADLFGGAASILEARLTGGLTLYLLDAPHLYDRPGGPYTDANGRDWADNAERFAAFCRAAADIALGILPDWTPDIVHAHDWQAGLVPAYLALSEASPRPPVLFTIHNLAFQGVVPRDRLAALLLPPDSFSVDGVEYYGQIGLLKAGLHYADALTTVSPSYAREIQTDTGGMGLGGLLRDRAAVLNGLLNGIDMTEWNPAHDPHVKAHFDRHSLEHRTINREALRTRFGLDSSAGPLFGIVSRLTGQKGIDLVLNALPFLISQQAQLVVLGSGDKGLEQGLLQAAQTHPRQIAVFSGYDEALSRQIFSGADAMLIPSRFEPCGLTQLYAMRYGAVPIVSRVGGLADTIIDANTAACEAGVATGLMFQPDGEDSLIEPLSRAIRLFHQAEIWERLQHRGMETDSSWTLRSTAYVALYTRLLSLR</sequence>
<name>GLGA_GRABC</name>
<comment type="function">
    <text evidence="1">Synthesizes alpha-1,4-glucan chains using ADP-glucose.</text>
</comment>
<comment type="catalytic activity">
    <reaction evidence="1">
        <text>[(1-&gt;4)-alpha-D-glucosyl](n) + ADP-alpha-D-glucose = [(1-&gt;4)-alpha-D-glucosyl](n+1) + ADP + H(+)</text>
        <dbReference type="Rhea" id="RHEA:18189"/>
        <dbReference type="Rhea" id="RHEA-COMP:9584"/>
        <dbReference type="Rhea" id="RHEA-COMP:9587"/>
        <dbReference type="ChEBI" id="CHEBI:15378"/>
        <dbReference type="ChEBI" id="CHEBI:15444"/>
        <dbReference type="ChEBI" id="CHEBI:57498"/>
        <dbReference type="ChEBI" id="CHEBI:456216"/>
        <dbReference type="EC" id="2.4.1.21"/>
    </reaction>
</comment>
<comment type="pathway">
    <text evidence="1">Glycan biosynthesis; glycogen biosynthesis.</text>
</comment>
<comment type="similarity">
    <text evidence="1">Belongs to the glycosyltransferase 1 family. Bacterial/plant glycogen synthase subfamily.</text>
</comment>
<dbReference type="EC" id="2.4.1.21" evidence="1"/>
<dbReference type="EMBL" id="CP000394">
    <property type="protein sequence ID" value="ABI63239.1"/>
    <property type="molecule type" value="Genomic_DNA"/>
</dbReference>
<dbReference type="RefSeq" id="WP_011633041.1">
    <property type="nucleotide sequence ID" value="NC_008343.2"/>
</dbReference>
<dbReference type="SMR" id="Q0BPL3"/>
<dbReference type="STRING" id="391165.GbCGDNIH1_2341"/>
<dbReference type="CAZy" id="GT5">
    <property type="family name" value="Glycosyltransferase Family 5"/>
</dbReference>
<dbReference type="KEGG" id="gbe:GbCGDNIH1_2341"/>
<dbReference type="eggNOG" id="COG0297">
    <property type="taxonomic scope" value="Bacteria"/>
</dbReference>
<dbReference type="HOGENOM" id="CLU_009583_18_4_5"/>
<dbReference type="OrthoDB" id="9808590at2"/>
<dbReference type="UniPathway" id="UPA00164"/>
<dbReference type="Proteomes" id="UP000001963">
    <property type="component" value="Chromosome"/>
</dbReference>
<dbReference type="GO" id="GO:0005829">
    <property type="term" value="C:cytosol"/>
    <property type="evidence" value="ECO:0007669"/>
    <property type="project" value="TreeGrafter"/>
</dbReference>
<dbReference type="GO" id="GO:0009011">
    <property type="term" value="F:alpha-1,4-glucan glucosyltransferase (ADP-glucose donor) activity"/>
    <property type="evidence" value="ECO:0007669"/>
    <property type="project" value="UniProtKB-UniRule"/>
</dbReference>
<dbReference type="GO" id="GO:0004373">
    <property type="term" value="F:alpha-1,4-glucan glucosyltransferase (UDP-glucose donor) activity"/>
    <property type="evidence" value="ECO:0007669"/>
    <property type="project" value="InterPro"/>
</dbReference>
<dbReference type="GO" id="GO:0005978">
    <property type="term" value="P:glycogen biosynthetic process"/>
    <property type="evidence" value="ECO:0007669"/>
    <property type="project" value="UniProtKB-UniRule"/>
</dbReference>
<dbReference type="CDD" id="cd03791">
    <property type="entry name" value="GT5_Glycogen_synthase_DULL1-like"/>
    <property type="match status" value="1"/>
</dbReference>
<dbReference type="Gene3D" id="3.40.50.2000">
    <property type="entry name" value="Glycogen Phosphorylase B"/>
    <property type="match status" value="2"/>
</dbReference>
<dbReference type="HAMAP" id="MF_00484">
    <property type="entry name" value="Glycogen_synth"/>
    <property type="match status" value="1"/>
</dbReference>
<dbReference type="InterPro" id="IPR011835">
    <property type="entry name" value="GS/SS"/>
</dbReference>
<dbReference type="InterPro" id="IPR013534">
    <property type="entry name" value="Starch_synth_cat_dom"/>
</dbReference>
<dbReference type="NCBIfam" id="TIGR02095">
    <property type="entry name" value="glgA"/>
    <property type="match status" value="1"/>
</dbReference>
<dbReference type="NCBIfam" id="NF001899">
    <property type="entry name" value="PRK00654.1-2"/>
    <property type="match status" value="1"/>
</dbReference>
<dbReference type="PANTHER" id="PTHR45825:SF11">
    <property type="entry name" value="ALPHA AMYLASE DOMAIN-CONTAINING PROTEIN"/>
    <property type="match status" value="1"/>
</dbReference>
<dbReference type="PANTHER" id="PTHR45825">
    <property type="entry name" value="GRANULE-BOUND STARCH SYNTHASE 1, CHLOROPLASTIC/AMYLOPLASTIC"/>
    <property type="match status" value="1"/>
</dbReference>
<dbReference type="Pfam" id="PF13692">
    <property type="entry name" value="Glyco_trans_1_4"/>
    <property type="match status" value="1"/>
</dbReference>
<dbReference type="Pfam" id="PF08323">
    <property type="entry name" value="Glyco_transf_5"/>
    <property type="match status" value="1"/>
</dbReference>
<dbReference type="SUPFAM" id="SSF53756">
    <property type="entry name" value="UDP-Glycosyltransferase/glycogen phosphorylase"/>
    <property type="match status" value="1"/>
</dbReference>
<gene>
    <name evidence="1" type="primary">glgA</name>
    <name type="ordered locus">GbCGDNIH1_2341</name>
</gene>